<organism>
    <name type="scientific">Arthroderma gypseum (strain ATCC MYA-4604 / CBS 118893)</name>
    <name type="common">Microsporum gypseum</name>
    <dbReference type="NCBI Taxonomy" id="535722"/>
    <lineage>
        <taxon>Eukaryota</taxon>
        <taxon>Fungi</taxon>
        <taxon>Dikarya</taxon>
        <taxon>Ascomycota</taxon>
        <taxon>Pezizomycotina</taxon>
        <taxon>Eurotiomycetes</taxon>
        <taxon>Eurotiomycetidae</taxon>
        <taxon>Onygenales</taxon>
        <taxon>Arthrodermataceae</taxon>
        <taxon>Nannizzia</taxon>
    </lineage>
</organism>
<evidence type="ECO:0000250" key="1"/>
<evidence type="ECO:0000255" key="2"/>
<evidence type="ECO:0000305" key="3"/>
<protein>
    <recommendedName>
        <fullName>Long chronological lifespan protein 2</fullName>
    </recommendedName>
</protein>
<sequence length="122" mass="13011">MASILRTALLGLLLFTTAQAQFQFFEQMFGGGQQHQESSGQGGNVPSDSAWYQNTYNGAQCSNYLCPGTLACVAVPHHCPCAHPKVEEKFELGEGSAICASKGGFKAGETARKIELARKGLL</sequence>
<comment type="function">
    <text evidence="1">Probable component of the endoplasmic reticulum-associated degradation (ERAD) pathway.</text>
</comment>
<comment type="similarity">
    <text evidence="3">Belongs to the LCL2 family.</text>
</comment>
<proteinExistence type="inferred from homology"/>
<feature type="signal peptide" evidence="2">
    <location>
        <begin position="1"/>
        <end position="20"/>
    </location>
</feature>
<feature type="chain" id="PRO_0000408588" description="Long chronological lifespan protein 2">
    <location>
        <begin position="21"/>
        <end position="122"/>
    </location>
</feature>
<reference key="1">
    <citation type="journal article" date="2012" name="MBio">
        <title>Comparative genome analysis of Trichophyton rubrum and related dermatophytes reveals candidate genes involved in infection.</title>
        <authorList>
            <person name="Martinez D.A."/>
            <person name="Oliver B.G."/>
            <person name="Graeser Y."/>
            <person name="Goldberg J.M."/>
            <person name="Li W."/>
            <person name="Martinez-Rossi N.M."/>
            <person name="Monod M."/>
            <person name="Shelest E."/>
            <person name="Barton R.C."/>
            <person name="Birch E."/>
            <person name="Brakhage A.A."/>
            <person name="Chen Z."/>
            <person name="Gurr S.J."/>
            <person name="Heiman D."/>
            <person name="Heitman J."/>
            <person name="Kosti I."/>
            <person name="Rossi A."/>
            <person name="Saif S."/>
            <person name="Samalova M."/>
            <person name="Saunders C.W."/>
            <person name="Shea T."/>
            <person name="Summerbell R.C."/>
            <person name="Xu J."/>
            <person name="Young S."/>
            <person name="Zeng Q."/>
            <person name="Birren B.W."/>
            <person name="Cuomo C.A."/>
            <person name="White T.C."/>
        </authorList>
    </citation>
    <scope>NUCLEOTIDE SEQUENCE [LARGE SCALE GENOMIC DNA]</scope>
    <source>
        <strain>ATCC MYA-4604 / CBS 118893</strain>
    </source>
</reference>
<gene>
    <name type="primary">LCL2</name>
    <name type="ORF">MGYG_03883</name>
</gene>
<dbReference type="EMBL" id="DS989824">
    <property type="protein sequence ID" value="EFR00880.1"/>
    <property type="molecule type" value="Genomic_DNA"/>
</dbReference>
<dbReference type="RefSeq" id="XP_003173710.1">
    <property type="nucleotide sequence ID" value="XM_003173662.1"/>
</dbReference>
<dbReference type="SMR" id="E4UUB3"/>
<dbReference type="GeneID" id="10028993"/>
<dbReference type="VEuPathDB" id="FungiDB:MGYG_03883"/>
<dbReference type="eggNOG" id="ENOG502S416">
    <property type="taxonomic scope" value="Eukaryota"/>
</dbReference>
<dbReference type="HOGENOM" id="CLU_142363_0_0_1"/>
<dbReference type="InParanoid" id="E4UUB3"/>
<dbReference type="OMA" id="DNYLCPD"/>
<dbReference type="OrthoDB" id="4173375at2759"/>
<dbReference type="Proteomes" id="UP000002669">
    <property type="component" value="Unassembled WGS sequence"/>
</dbReference>
<dbReference type="GO" id="GO:0036503">
    <property type="term" value="P:ERAD pathway"/>
    <property type="evidence" value="ECO:0007669"/>
    <property type="project" value="TreeGrafter"/>
</dbReference>
<dbReference type="CDD" id="cd23996">
    <property type="entry name" value="LCL2-like"/>
    <property type="match status" value="1"/>
</dbReference>
<dbReference type="InterPro" id="IPR034543">
    <property type="entry name" value="LCL2"/>
</dbReference>
<dbReference type="PANTHER" id="PTHR38425">
    <property type="entry name" value="LONG CHRONOLOGICAL LIFESPAN PROTEIN 2"/>
    <property type="match status" value="1"/>
</dbReference>
<dbReference type="PANTHER" id="PTHR38425:SF1">
    <property type="entry name" value="LONG CHRONOLOGICAL LIFESPAN PROTEIN 2"/>
    <property type="match status" value="1"/>
</dbReference>
<name>LCL2_ARTGP</name>
<accession>E4UUB3</accession>
<keyword id="KW-1185">Reference proteome</keyword>
<keyword id="KW-0732">Signal</keyword>